<proteinExistence type="inferred from homology"/>
<accession>Q9LC44</accession>
<evidence type="ECO:0000255" key="1">
    <source>
        <dbReference type="HAMAP-Rule" id="MF_01715"/>
    </source>
</evidence>
<feature type="chain" id="PRO_0000093000" description="Teichoic acids export ATP-binding protein TagH">
    <location>
        <begin position="1"/>
        <end position="264"/>
    </location>
</feature>
<feature type="domain" description="ABC transporter" evidence="1">
    <location>
        <begin position="5"/>
        <end position="243"/>
    </location>
</feature>
<feature type="binding site" evidence="1">
    <location>
        <begin position="57"/>
        <end position="64"/>
    </location>
    <ligand>
        <name>ATP</name>
        <dbReference type="ChEBI" id="CHEBI:30616"/>
    </ligand>
</feature>
<name>TAGH_STAAU</name>
<protein>
    <recommendedName>
        <fullName evidence="1">Teichoic acids export ATP-binding protein TagH</fullName>
        <ecNumber evidence="1">7.5.2.4</ecNumber>
    </recommendedName>
</protein>
<reference key="1">
    <citation type="journal article" date="2000" name="FEMS Microbiol. Lett.">
        <title>The staphylokinase gene is located in the structural gene encoding N-acetylmuramyl-L-alanine amidase in methicillin-resistant Staphylococcus aureus.</title>
        <authorList>
            <person name="Horii T."/>
            <person name="Yokoyama K."/>
            <person name="Barua S."/>
            <person name="Odagiri T."/>
            <person name="Futamura N."/>
            <person name="Hasegawa T."/>
            <person name="Ohta M."/>
        </authorList>
    </citation>
    <scope>NUCLEOTIDE SEQUENCE [GENOMIC DNA]</scope>
    <source>
        <strain>NU3-1</strain>
    </source>
</reference>
<keyword id="KW-0067">ATP-binding</keyword>
<keyword id="KW-1003">Cell membrane</keyword>
<keyword id="KW-0472">Membrane</keyword>
<keyword id="KW-0547">Nucleotide-binding</keyword>
<keyword id="KW-1278">Translocase</keyword>
<keyword id="KW-0813">Transport</keyword>
<comment type="function">
    <text evidence="1">Part of the ABC transporter complex TagGH involved in teichoic acids export. Responsible for energy coupling to the transport system.</text>
</comment>
<comment type="catalytic activity">
    <reaction evidence="1">
        <text>ATP + H2O + teichoic acidSide 1 = ADP + phosphate + teichoic acidSide 2.</text>
        <dbReference type="EC" id="7.5.2.4"/>
    </reaction>
</comment>
<comment type="subunit">
    <text evidence="1">The complex is composed of two ATP-binding proteins (TagH) and two transmembrane proteins (TagG).</text>
</comment>
<comment type="subcellular location">
    <subcellularLocation>
        <location evidence="1">Cell membrane</location>
        <topology evidence="1">Peripheral membrane protein</topology>
    </subcellularLocation>
</comment>
<comment type="similarity">
    <text evidence="1">Belongs to the ABC transporter superfamily. Teichoic acids exporter (TC 3.A.1.104.1) family.</text>
</comment>
<organism>
    <name type="scientific">Staphylococcus aureus</name>
    <dbReference type="NCBI Taxonomy" id="1280"/>
    <lineage>
        <taxon>Bacteria</taxon>
        <taxon>Bacillati</taxon>
        <taxon>Bacillota</taxon>
        <taxon>Bacilli</taxon>
        <taxon>Bacillales</taxon>
        <taxon>Staphylococcaceae</taxon>
        <taxon>Staphylococcus</taxon>
    </lineage>
</organism>
<dbReference type="EC" id="7.5.2.4" evidence="1"/>
<dbReference type="EMBL" id="AB033232">
    <property type="protein sequence ID" value="BAA95013.1"/>
    <property type="molecule type" value="Genomic_DNA"/>
</dbReference>
<dbReference type="PIR" id="F89833">
    <property type="entry name" value="F89833"/>
</dbReference>
<dbReference type="RefSeq" id="WP_001103231.1">
    <property type="nucleotide sequence ID" value="NZ_WYDB01000004.1"/>
</dbReference>
<dbReference type="SMR" id="Q9LC44"/>
<dbReference type="OMA" id="GDEPFQK"/>
<dbReference type="GO" id="GO:0005886">
    <property type="term" value="C:plasma membrane"/>
    <property type="evidence" value="ECO:0007669"/>
    <property type="project" value="UniProtKB-SubCell"/>
</dbReference>
<dbReference type="GO" id="GO:0015438">
    <property type="term" value="F:ABC-type teichoic acid transporter activity"/>
    <property type="evidence" value="ECO:0007669"/>
    <property type="project" value="UniProtKB-EC"/>
</dbReference>
<dbReference type="GO" id="GO:0005524">
    <property type="term" value="F:ATP binding"/>
    <property type="evidence" value="ECO:0007669"/>
    <property type="project" value="UniProtKB-KW"/>
</dbReference>
<dbReference type="GO" id="GO:0016887">
    <property type="term" value="F:ATP hydrolysis activity"/>
    <property type="evidence" value="ECO:0007669"/>
    <property type="project" value="InterPro"/>
</dbReference>
<dbReference type="CDD" id="cd03220">
    <property type="entry name" value="ABC_KpsT_Wzt"/>
    <property type="match status" value="1"/>
</dbReference>
<dbReference type="FunFam" id="3.40.50.300:FF:003010">
    <property type="entry name" value="Teichoic acids export ATP-binding protein TagH"/>
    <property type="match status" value="1"/>
</dbReference>
<dbReference type="Gene3D" id="3.40.50.300">
    <property type="entry name" value="P-loop containing nucleotide triphosphate hydrolases"/>
    <property type="match status" value="1"/>
</dbReference>
<dbReference type="InterPro" id="IPR003593">
    <property type="entry name" value="AAA+_ATPase"/>
</dbReference>
<dbReference type="InterPro" id="IPR003439">
    <property type="entry name" value="ABC_transporter-like_ATP-bd"/>
</dbReference>
<dbReference type="InterPro" id="IPR017871">
    <property type="entry name" value="ABC_transporter-like_CS"/>
</dbReference>
<dbReference type="InterPro" id="IPR015860">
    <property type="entry name" value="ABC_transpr_TagH-like"/>
</dbReference>
<dbReference type="InterPro" id="IPR050683">
    <property type="entry name" value="Bact_Polysacc_Export_ATP-bd"/>
</dbReference>
<dbReference type="InterPro" id="IPR027417">
    <property type="entry name" value="P-loop_NTPase"/>
</dbReference>
<dbReference type="NCBIfam" id="NF010066">
    <property type="entry name" value="PRK13546.1"/>
    <property type="match status" value="1"/>
</dbReference>
<dbReference type="PANTHER" id="PTHR46743">
    <property type="entry name" value="TEICHOIC ACIDS EXPORT ATP-BINDING PROTEIN TAGH"/>
    <property type="match status" value="1"/>
</dbReference>
<dbReference type="PANTHER" id="PTHR46743:SF2">
    <property type="entry name" value="TEICHOIC ACIDS EXPORT ATP-BINDING PROTEIN TAGH"/>
    <property type="match status" value="1"/>
</dbReference>
<dbReference type="Pfam" id="PF00005">
    <property type="entry name" value="ABC_tran"/>
    <property type="match status" value="1"/>
</dbReference>
<dbReference type="SMART" id="SM00382">
    <property type="entry name" value="AAA"/>
    <property type="match status" value="1"/>
</dbReference>
<dbReference type="SUPFAM" id="SSF52540">
    <property type="entry name" value="P-loop containing nucleoside triphosphate hydrolases"/>
    <property type="match status" value="1"/>
</dbReference>
<dbReference type="PROSITE" id="PS00211">
    <property type="entry name" value="ABC_TRANSPORTER_1"/>
    <property type="match status" value="1"/>
</dbReference>
<dbReference type="PROSITE" id="PS50893">
    <property type="entry name" value="ABC_TRANSPORTER_2"/>
    <property type="match status" value="1"/>
</dbReference>
<dbReference type="PROSITE" id="PS51251">
    <property type="entry name" value="TAGH"/>
    <property type="match status" value="1"/>
</dbReference>
<gene>
    <name evidence="1" type="primary">tagH</name>
</gene>
<sequence length="264" mass="29747">MNVSVNIKNVTKEYRIYRTNKERMKDALIPKHKNKTFFALDDISLKAYEGDVIGLVGINGSGKSTLSNIIGGSLSPTVGKVDRNGEVSVIAISAGLSGQLTGIENIEFKMLCMGFKRKEIKAMTPKIIEFSELGEFIYQPVKKYSSGMRAKLGFSINITVNPDILVIDEALSVGDQTFAQKCLDKIYEFKEQNKTIFFVSHNLGQVRQFCTKIAWIEGGKLKDYGELDDVLPKYEAFLNDFKKKSKAEQKEFRNKLDEARFVIK</sequence>